<proteinExistence type="inferred from homology"/>
<feature type="chain" id="PRO_0000281448" description="tRNA/tmRNA (uracil-C(5))-methyltransferase">
    <location>
        <begin position="1"/>
        <end position="365"/>
    </location>
</feature>
<feature type="active site" description="Nucleophile" evidence="1">
    <location>
        <position position="323"/>
    </location>
</feature>
<feature type="active site" description="Proton acceptor" evidence="1">
    <location>
        <position position="357"/>
    </location>
</feature>
<feature type="binding site" evidence="1">
    <location>
        <position position="189"/>
    </location>
    <ligand>
        <name>S-adenosyl-L-methionine</name>
        <dbReference type="ChEBI" id="CHEBI:59789"/>
    </ligand>
</feature>
<feature type="binding site" evidence="1">
    <location>
        <position position="217"/>
    </location>
    <ligand>
        <name>S-adenosyl-L-methionine</name>
        <dbReference type="ChEBI" id="CHEBI:59789"/>
    </ligand>
</feature>
<feature type="binding site" evidence="1">
    <location>
        <position position="222"/>
    </location>
    <ligand>
        <name>S-adenosyl-L-methionine</name>
        <dbReference type="ChEBI" id="CHEBI:59789"/>
    </ligand>
</feature>
<feature type="binding site" evidence="1">
    <location>
        <position position="238"/>
    </location>
    <ligand>
        <name>S-adenosyl-L-methionine</name>
        <dbReference type="ChEBI" id="CHEBI:59789"/>
    </ligand>
</feature>
<feature type="binding site" evidence="1">
    <location>
        <position position="298"/>
    </location>
    <ligand>
        <name>S-adenosyl-L-methionine</name>
        <dbReference type="ChEBI" id="CHEBI:59789"/>
    </ligand>
</feature>
<organism>
    <name type="scientific">Pseudoalteromonas atlantica (strain T6c / ATCC BAA-1087)</name>
    <dbReference type="NCBI Taxonomy" id="3042615"/>
    <lineage>
        <taxon>Bacteria</taxon>
        <taxon>Pseudomonadati</taxon>
        <taxon>Pseudomonadota</taxon>
        <taxon>Gammaproteobacteria</taxon>
        <taxon>Alteromonadales</taxon>
        <taxon>Alteromonadaceae</taxon>
        <taxon>Paraglaciecola</taxon>
    </lineage>
</organism>
<comment type="function">
    <text evidence="1">Dual-specificity methyltransferase that catalyzes the formation of 5-methyluridine at position 54 (m5U54) in all tRNAs, and that of position 341 (m5U341) in tmRNA (transfer-mRNA).</text>
</comment>
<comment type="catalytic activity">
    <reaction evidence="1">
        <text>uridine(54) in tRNA + S-adenosyl-L-methionine = 5-methyluridine(54) in tRNA + S-adenosyl-L-homocysteine + H(+)</text>
        <dbReference type="Rhea" id="RHEA:42712"/>
        <dbReference type="Rhea" id="RHEA-COMP:10167"/>
        <dbReference type="Rhea" id="RHEA-COMP:10193"/>
        <dbReference type="ChEBI" id="CHEBI:15378"/>
        <dbReference type="ChEBI" id="CHEBI:57856"/>
        <dbReference type="ChEBI" id="CHEBI:59789"/>
        <dbReference type="ChEBI" id="CHEBI:65315"/>
        <dbReference type="ChEBI" id="CHEBI:74447"/>
        <dbReference type="EC" id="2.1.1.35"/>
    </reaction>
</comment>
<comment type="catalytic activity">
    <reaction evidence="1">
        <text>uridine(341) in tmRNA + S-adenosyl-L-methionine = 5-methyluridine(341) in tmRNA + S-adenosyl-L-homocysteine + H(+)</text>
        <dbReference type="Rhea" id="RHEA:43612"/>
        <dbReference type="Rhea" id="RHEA-COMP:10630"/>
        <dbReference type="Rhea" id="RHEA-COMP:10631"/>
        <dbReference type="ChEBI" id="CHEBI:15378"/>
        <dbReference type="ChEBI" id="CHEBI:57856"/>
        <dbReference type="ChEBI" id="CHEBI:59789"/>
        <dbReference type="ChEBI" id="CHEBI:65315"/>
        <dbReference type="ChEBI" id="CHEBI:74447"/>
    </reaction>
</comment>
<comment type="similarity">
    <text evidence="1">Belongs to the class I-like SAM-binding methyltransferase superfamily. RNA M5U methyltransferase family. TrmA subfamily.</text>
</comment>
<reference key="1">
    <citation type="submission" date="2006-06" db="EMBL/GenBank/DDBJ databases">
        <title>Complete sequence of Pseudoalteromonas atlantica T6c.</title>
        <authorList>
            <consortium name="US DOE Joint Genome Institute"/>
            <person name="Copeland A."/>
            <person name="Lucas S."/>
            <person name="Lapidus A."/>
            <person name="Barry K."/>
            <person name="Detter J.C."/>
            <person name="Glavina del Rio T."/>
            <person name="Hammon N."/>
            <person name="Israni S."/>
            <person name="Dalin E."/>
            <person name="Tice H."/>
            <person name="Pitluck S."/>
            <person name="Saunders E."/>
            <person name="Brettin T."/>
            <person name="Bruce D."/>
            <person name="Han C."/>
            <person name="Tapia R."/>
            <person name="Gilna P."/>
            <person name="Schmutz J."/>
            <person name="Larimer F."/>
            <person name="Land M."/>
            <person name="Hauser L."/>
            <person name="Kyrpides N."/>
            <person name="Kim E."/>
            <person name="Karls A.C."/>
            <person name="Bartlett D."/>
            <person name="Higgins B.P."/>
            <person name="Richardson P."/>
        </authorList>
    </citation>
    <scope>NUCLEOTIDE SEQUENCE [LARGE SCALE GENOMIC DNA]</scope>
    <source>
        <strain>T6c / ATCC BAA-1087</strain>
    </source>
</reference>
<protein>
    <recommendedName>
        <fullName evidence="1">tRNA/tmRNA (uracil-C(5))-methyltransferase</fullName>
        <ecNumber evidence="1">2.1.1.-</ecNumber>
        <ecNumber evidence="1">2.1.1.35</ecNumber>
    </recommendedName>
    <alternativeName>
        <fullName evidence="1">tRNA (uracil(54)-C(5))-methyltransferase</fullName>
    </alternativeName>
    <alternativeName>
        <fullName evidence="1">tRNA(m5U54)-methyltransferase</fullName>
        <shortName evidence="1">RUMT</shortName>
    </alternativeName>
    <alternativeName>
        <fullName evidence="1">tmRNA (uracil(341)-C(5))-methyltransferase</fullName>
    </alternativeName>
</protein>
<sequence>MRPTEINPADYEQQLAQKVNSVQQAFKTFSMPALEAFSSAPLNYRMRAEFRMWHDGDNLDHVMFDQSTKQKYAVNQFPPASIVINEVMMKLLSLVKKNEVLRRKLFQIDYLSTLTNEILVTLVYHKPLEDEWLKEAKALRALLRDEFKIDIIGRAKKQKVLLDKDYVIETLPVNDRLYTFKQIENSFTQPNAGVNSKMLEWALDVTQDCQGDLLELYCGAGNFSLPLAQNFRQVLATEISKSSVAAAQDNIRLNNIENVTILRMSSEEFVQALNNERSFRRLEGINLQDYDCQTVLVDPPRSGLDDDTLDMIKEYQNIVYISCNPETLNNNLAVLSETHNVVRFALFDQFPYTHHVESGVYLQKR</sequence>
<evidence type="ECO:0000255" key="1">
    <source>
        <dbReference type="HAMAP-Rule" id="MF_01011"/>
    </source>
</evidence>
<dbReference type="EC" id="2.1.1.-" evidence="1"/>
<dbReference type="EC" id="2.1.1.35" evidence="1"/>
<dbReference type="EMBL" id="CP000388">
    <property type="protein sequence ID" value="ABG42529.1"/>
    <property type="molecule type" value="Genomic_DNA"/>
</dbReference>
<dbReference type="RefSeq" id="WP_011576727.1">
    <property type="nucleotide sequence ID" value="NC_008228.1"/>
</dbReference>
<dbReference type="SMR" id="Q15NK9"/>
<dbReference type="STRING" id="342610.Patl_4030"/>
<dbReference type="KEGG" id="pat:Patl_4030"/>
<dbReference type="eggNOG" id="COG2265">
    <property type="taxonomic scope" value="Bacteria"/>
</dbReference>
<dbReference type="HOGENOM" id="CLU_043022_0_0_6"/>
<dbReference type="OrthoDB" id="9804590at2"/>
<dbReference type="Proteomes" id="UP000001981">
    <property type="component" value="Chromosome"/>
</dbReference>
<dbReference type="GO" id="GO:0005829">
    <property type="term" value="C:cytosol"/>
    <property type="evidence" value="ECO:0007669"/>
    <property type="project" value="TreeGrafter"/>
</dbReference>
<dbReference type="GO" id="GO:0019843">
    <property type="term" value="F:rRNA binding"/>
    <property type="evidence" value="ECO:0007669"/>
    <property type="project" value="TreeGrafter"/>
</dbReference>
<dbReference type="GO" id="GO:0030697">
    <property type="term" value="F:tRNA (uracil(54)-C5)-methyltransferase activity, S-adenosyl methionine-dependent"/>
    <property type="evidence" value="ECO:0007669"/>
    <property type="project" value="UniProtKB-UniRule"/>
</dbReference>
<dbReference type="GO" id="GO:0000049">
    <property type="term" value="F:tRNA binding"/>
    <property type="evidence" value="ECO:0007669"/>
    <property type="project" value="TreeGrafter"/>
</dbReference>
<dbReference type="GO" id="GO:0030488">
    <property type="term" value="P:tRNA methylation"/>
    <property type="evidence" value="ECO:0007669"/>
    <property type="project" value="UniProtKB-UniRule"/>
</dbReference>
<dbReference type="CDD" id="cd02440">
    <property type="entry name" value="AdoMet_MTases"/>
    <property type="match status" value="1"/>
</dbReference>
<dbReference type="FunFam" id="2.40.50.1070:FF:000001">
    <property type="entry name" value="tRNA/tmRNA (uracil-C(5))-methyltransferase"/>
    <property type="match status" value="1"/>
</dbReference>
<dbReference type="FunFam" id="3.40.50.150:FF:000012">
    <property type="entry name" value="tRNA/tmRNA (uracil-C(5))-methyltransferase"/>
    <property type="match status" value="1"/>
</dbReference>
<dbReference type="Gene3D" id="2.40.50.1070">
    <property type="match status" value="1"/>
</dbReference>
<dbReference type="Gene3D" id="3.40.50.150">
    <property type="entry name" value="Vaccinia Virus protein VP39"/>
    <property type="match status" value="1"/>
</dbReference>
<dbReference type="HAMAP" id="MF_01011">
    <property type="entry name" value="RNA_methyltr_TrmA"/>
    <property type="match status" value="1"/>
</dbReference>
<dbReference type="InterPro" id="IPR030390">
    <property type="entry name" value="MeTrfase_TrmA_AS"/>
</dbReference>
<dbReference type="InterPro" id="IPR030391">
    <property type="entry name" value="MeTrfase_TrmA_CS"/>
</dbReference>
<dbReference type="InterPro" id="IPR029063">
    <property type="entry name" value="SAM-dependent_MTases_sf"/>
</dbReference>
<dbReference type="InterPro" id="IPR011869">
    <property type="entry name" value="TrmA_MeTrfase"/>
</dbReference>
<dbReference type="InterPro" id="IPR010280">
    <property type="entry name" value="U5_MeTrfase_fam"/>
</dbReference>
<dbReference type="NCBIfam" id="TIGR02143">
    <property type="entry name" value="trmA_only"/>
    <property type="match status" value="1"/>
</dbReference>
<dbReference type="PANTHER" id="PTHR47790">
    <property type="entry name" value="TRNA/TMRNA (URACIL-C(5))-METHYLTRANSFERASE"/>
    <property type="match status" value="1"/>
</dbReference>
<dbReference type="PANTHER" id="PTHR47790:SF2">
    <property type="entry name" value="TRNA_TMRNA (URACIL-C(5))-METHYLTRANSFERASE"/>
    <property type="match status" value="1"/>
</dbReference>
<dbReference type="Pfam" id="PF05958">
    <property type="entry name" value="tRNA_U5-meth_tr"/>
    <property type="match status" value="1"/>
</dbReference>
<dbReference type="SUPFAM" id="SSF53335">
    <property type="entry name" value="S-adenosyl-L-methionine-dependent methyltransferases"/>
    <property type="match status" value="1"/>
</dbReference>
<dbReference type="PROSITE" id="PS51687">
    <property type="entry name" value="SAM_MT_RNA_M5U"/>
    <property type="match status" value="1"/>
</dbReference>
<dbReference type="PROSITE" id="PS01230">
    <property type="entry name" value="TRMA_1"/>
    <property type="match status" value="1"/>
</dbReference>
<dbReference type="PROSITE" id="PS01231">
    <property type="entry name" value="TRMA_2"/>
    <property type="match status" value="1"/>
</dbReference>
<accession>Q15NK9</accession>
<keyword id="KW-0489">Methyltransferase</keyword>
<keyword id="KW-0949">S-adenosyl-L-methionine</keyword>
<keyword id="KW-0808">Transferase</keyword>
<keyword id="KW-0819">tRNA processing</keyword>
<name>TRMA_PSEA6</name>
<gene>
    <name evidence="1" type="primary">trmA</name>
    <name type="ordered locus">Patl_4030</name>
</gene>